<proteinExistence type="inferred from homology"/>
<feature type="chain" id="PRO_1000002273" description="Acetate kinase">
    <location>
        <begin position="1"/>
        <end position="398"/>
    </location>
</feature>
<feature type="active site" description="Proton donor/acceptor" evidence="1">
    <location>
        <position position="146"/>
    </location>
</feature>
<feature type="binding site" evidence="1">
    <location>
        <position position="8"/>
    </location>
    <ligand>
        <name>Mg(2+)</name>
        <dbReference type="ChEBI" id="CHEBI:18420"/>
    </ligand>
</feature>
<feature type="binding site" evidence="1">
    <location>
        <position position="15"/>
    </location>
    <ligand>
        <name>ATP</name>
        <dbReference type="ChEBI" id="CHEBI:30616"/>
    </ligand>
</feature>
<feature type="binding site" evidence="1">
    <location>
        <position position="89"/>
    </location>
    <ligand>
        <name>substrate</name>
    </ligand>
</feature>
<feature type="binding site" evidence="1">
    <location>
        <begin position="206"/>
        <end position="210"/>
    </location>
    <ligand>
        <name>ATP</name>
        <dbReference type="ChEBI" id="CHEBI:30616"/>
    </ligand>
</feature>
<feature type="binding site" evidence="1">
    <location>
        <begin position="283"/>
        <end position="285"/>
    </location>
    <ligand>
        <name>ATP</name>
        <dbReference type="ChEBI" id="CHEBI:30616"/>
    </ligand>
</feature>
<feature type="binding site" evidence="1">
    <location>
        <begin position="331"/>
        <end position="335"/>
    </location>
    <ligand>
        <name>ATP</name>
        <dbReference type="ChEBI" id="CHEBI:30616"/>
    </ligand>
</feature>
<feature type="binding site" evidence="1">
    <location>
        <position position="383"/>
    </location>
    <ligand>
        <name>Mg(2+)</name>
        <dbReference type="ChEBI" id="CHEBI:18420"/>
    </ligand>
</feature>
<feature type="site" description="Transition state stabilizer" evidence="1">
    <location>
        <position position="178"/>
    </location>
</feature>
<feature type="site" description="Transition state stabilizer" evidence="1">
    <location>
        <position position="239"/>
    </location>
</feature>
<name>ACKA_STRPF</name>
<keyword id="KW-0067">ATP-binding</keyword>
<keyword id="KW-0963">Cytoplasm</keyword>
<keyword id="KW-0418">Kinase</keyword>
<keyword id="KW-0460">Magnesium</keyword>
<keyword id="KW-0479">Metal-binding</keyword>
<keyword id="KW-0547">Nucleotide-binding</keyword>
<keyword id="KW-0808">Transferase</keyword>
<reference key="1">
    <citation type="journal article" date="2006" name="Proc. Natl. Acad. Sci. U.S.A.">
        <title>Molecular genetic anatomy of inter- and intraserotype variation in the human bacterial pathogen group A Streptococcus.</title>
        <authorList>
            <person name="Beres S.B."/>
            <person name="Richter E.W."/>
            <person name="Nagiec M.J."/>
            <person name="Sumby P."/>
            <person name="Porcella S.F."/>
            <person name="DeLeo F.R."/>
            <person name="Musser J.M."/>
        </authorList>
    </citation>
    <scope>NUCLEOTIDE SEQUENCE [LARGE SCALE GENOMIC DNA]</scope>
    <source>
        <strain>MGAS10750</strain>
    </source>
</reference>
<sequence length="398" mass="43519">MSKTIAINAGSSSLKWQLYQMPEEAVLAQGIIERIGLKDSISTVKYDGKKEEQILDIHDHTEAVKILLNDLIHFGIIAAYDEITGVGHRVVAGGELFKESVVVNDKVLEQIEELSVLAPLHNPGAAAGIRAFRDILPDITSVCVFDTSFHTSMAKHTYLYPIPQKYYTDYKVRKYGAHGTSHKYVAQEAAKMLGRPLEELKLITAHIGNGVSITANYHGQSADTSMGFTPLAGPMMGTRSGDIDPAIIPYLIEQDPELKDAADVVNMLNKKSGLSGVSGISSDMRDIEAGLQEDNPDAVLAYNIFIDRIKKCIGQYFAVLNGADALVFTAGMGENAPLMRQDVIGGLTWFGMDIDPEKNVFGYRGDISTPESKVKVLVISTDEELCIARDVERLKNTK</sequence>
<comment type="function">
    <text evidence="1">Catalyzes the formation of acetyl phosphate from acetate and ATP. Can also catalyze the reverse reaction.</text>
</comment>
<comment type="catalytic activity">
    <reaction evidence="1">
        <text>acetate + ATP = acetyl phosphate + ADP</text>
        <dbReference type="Rhea" id="RHEA:11352"/>
        <dbReference type="ChEBI" id="CHEBI:22191"/>
        <dbReference type="ChEBI" id="CHEBI:30089"/>
        <dbReference type="ChEBI" id="CHEBI:30616"/>
        <dbReference type="ChEBI" id="CHEBI:456216"/>
        <dbReference type="EC" id="2.7.2.1"/>
    </reaction>
</comment>
<comment type="cofactor">
    <cofactor evidence="1">
        <name>Mg(2+)</name>
        <dbReference type="ChEBI" id="CHEBI:18420"/>
    </cofactor>
    <cofactor evidence="1">
        <name>Mn(2+)</name>
        <dbReference type="ChEBI" id="CHEBI:29035"/>
    </cofactor>
    <text evidence="1">Mg(2+). Can also accept Mn(2+).</text>
</comment>
<comment type="pathway">
    <text evidence="1">Metabolic intermediate biosynthesis; acetyl-CoA biosynthesis; acetyl-CoA from acetate: step 1/2.</text>
</comment>
<comment type="subunit">
    <text evidence="1">Homodimer.</text>
</comment>
<comment type="subcellular location">
    <subcellularLocation>
        <location evidence="1">Cytoplasm</location>
    </subcellularLocation>
</comment>
<comment type="similarity">
    <text evidence="1">Belongs to the acetokinase family.</text>
</comment>
<evidence type="ECO:0000255" key="1">
    <source>
        <dbReference type="HAMAP-Rule" id="MF_00020"/>
    </source>
</evidence>
<organism>
    <name type="scientific">Streptococcus pyogenes serotype M4 (strain MGAS10750)</name>
    <dbReference type="NCBI Taxonomy" id="370554"/>
    <lineage>
        <taxon>Bacteria</taxon>
        <taxon>Bacillati</taxon>
        <taxon>Bacillota</taxon>
        <taxon>Bacilli</taxon>
        <taxon>Lactobacillales</taxon>
        <taxon>Streptococcaceae</taxon>
        <taxon>Streptococcus</taxon>
    </lineage>
</organism>
<protein>
    <recommendedName>
        <fullName evidence="1">Acetate kinase</fullName>
        <ecNumber evidence="1">2.7.2.1</ecNumber>
    </recommendedName>
    <alternativeName>
        <fullName evidence="1">Acetokinase</fullName>
    </alternativeName>
</protein>
<gene>
    <name evidence="1" type="primary">ackA</name>
    <name type="ordered locus">MGAS10750_Spy0101</name>
</gene>
<accession>Q1J8W0</accession>
<dbReference type="EC" id="2.7.2.1" evidence="1"/>
<dbReference type="EMBL" id="CP000262">
    <property type="protein sequence ID" value="ABF37051.1"/>
    <property type="molecule type" value="Genomic_DNA"/>
</dbReference>
<dbReference type="SMR" id="Q1J8W0"/>
<dbReference type="KEGG" id="spi:MGAS10750_Spy0101"/>
<dbReference type="HOGENOM" id="CLU_020352_0_1_9"/>
<dbReference type="UniPathway" id="UPA00340">
    <property type="reaction ID" value="UER00458"/>
</dbReference>
<dbReference type="Proteomes" id="UP000002434">
    <property type="component" value="Chromosome"/>
</dbReference>
<dbReference type="GO" id="GO:0005737">
    <property type="term" value="C:cytoplasm"/>
    <property type="evidence" value="ECO:0007669"/>
    <property type="project" value="UniProtKB-SubCell"/>
</dbReference>
<dbReference type="GO" id="GO:0008776">
    <property type="term" value="F:acetate kinase activity"/>
    <property type="evidence" value="ECO:0007669"/>
    <property type="project" value="UniProtKB-UniRule"/>
</dbReference>
<dbReference type="GO" id="GO:0005524">
    <property type="term" value="F:ATP binding"/>
    <property type="evidence" value="ECO:0007669"/>
    <property type="project" value="UniProtKB-KW"/>
</dbReference>
<dbReference type="GO" id="GO:0000287">
    <property type="term" value="F:magnesium ion binding"/>
    <property type="evidence" value="ECO:0007669"/>
    <property type="project" value="UniProtKB-UniRule"/>
</dbReference>
<dbReference type="GO" id="GO:0006083">
    <property type="term" value="P:acetate metabolic process"/>
    <property type="evidence" value="ECO:0007669"/>
    <property type="project" value="TreeGrafter"/>
</dbReference>
<dbReference type="GO" id="GO:0006085">
    <property type="term" value="P:acetyl-CoA biosynthetic process"/>
    <property type="evidence" value="ECO:0007669"/>
    <property type="project" value="UniProtKB-UniRule"/>
</dbReference>
<dbReference type="CDD" id="cd24010">
    <property type="entry name" value="ASKHA_NBD_AcK_PK"/>
    <property type="match status" value="1"/>
</dbReference>
<dbReference type="Gene3D" id="3.30.420.40">
    <property type="match status" value="2"/>
</dbReference>
<dbReference type="HAMAP" id="MF_00020">
    <property type="entry name" value="Acetate_kinase"/>
    <property type="match status" value="1"/>
</dbReference>
<dbReference type="InterPro" id="IPR004372">
    <property type="entry name" value="Ac/propionate_kinase"/>
</dbReference>
<dbReference type="InterPro" id="IPR000890">
    <property type="entry name" value="Aliphatic_acid_kin_short-chain"/>
</dbReference>
<dbReference type="InterPro" id="IPR023865">
    <property type="entry name" value="Aliphatic_acid_kinase_CS"/>
</dbReference>
<dbReference type="InterPro" id="IPR043129">
    <property type="entry name" value="ATPase_NBD"/>
</dbReference>
<dbReference type="NCBIfam" id="TIGR00016">
    <property type="entry name" value="ackA"/>
    <property type="match status" value="1"/>
</dbReference>
<dbReference type="PANTHER" id="PTHR21060">
    <property type="entry name" value="ACETATE KINASE"/>
    <property type="match status" value="1"/>
</dbReference>
<dbReference type="PANTHER" id="PTHR21060:SF15">
    <property type="entry name" value="ACETATE KINASE-RELATED"/>
    <property type="match status" value="1"/>
</dbReference>
<dbReference type="Pfam" id="PF00871">
    <property type="entry name" value="Acetate_kinase"/>
    <property type="match status" value="1"/>
</dbReference>
<dbReference type="PIRSF" id="PIRSF000722">
    <property type="entry name" value="Acetate_prop_kin"/>
    <property type="match status" value="1"/>
</dbReference>
<dbReference type="PRINTS" id="PR00471">
    <property type="entry name" value="ACETATEKNASE"/>
</dbReference>
<dbReference type="SUPFAM" id="SSF53067">
    <property type="entry name" value="Actin-like ATPase domain"/>
    <property type="match status" value="2"/>
</dbReference>
<dbReference type="PROSITE" id="PS01075">
    <property type="entry name" value="ACETATE_KINASE_1"/>
    <property type="match status" value="1"/>
</dbReference>
<dbReference type="PROSITE" id="PS01076">
    <property type="entry name" value="ACETATE_KINASE_2"/>
    <property type="match status" value="1"/>
</dbReference>